<evidence type="ECO:0000255" key="1"/>
<evidence type="ECO:0000255" key="2">
    <source>
        <dbReference type="PROSITE-ProRule" id="PRU00498"/>
    </source>
</evidence>
<evidence type="ECO:0000255" key="3">
    <source>
        <dbReference type="PROSITE-ProRule" id="PRU00718"/>
    </source>
</evidence>
<evidence type="ECO:0000269" key="4">
    <source>
    </source>
</evidence>
<evidence type="ECO:0000269" key="5">
    <source>
    </source>
</evidence>
<evidence type="ECO:0000269" key="6">
    <source>
    </source>
</evidence>
<evidence type="ECO:0000303" key="7">
    <source>
    </source>
</evidence>
<evidence type="ECO:0000305" key="8"/>
<evidence type="ECO:0000305" key="9">
    <source>
    </source>
</evidence>
<sequence>MRDIRELLLVLFTSCLALGSVPSSFDGDRYCRCQPGEACWPSLADWQALNMSIQGTLVEVRPIGHVCHEPTYNKADCERVSKLSSNGTWRASQPGAQQEHAWEVSLSRNESCYVGPANPAEPCGQGRIPRYSAMVETTEQAQKAIRFARERRLRLVIKNTGHDSGGRSSAVDSFQILTQRLKDISFIEEFTPTLAETRGPSVRIGAGVLTKELYAVADEHGYTAMGGECATVGVAGGYIQGGGVSTALTPMMGLAADLVQEFEVISAEGSLVIANEFQNQDLFWALRGGGGGTVGLVTSITMPVFGAIPANISELSFESQQPDEAFWTAVKEMIYVTRDITTGGNSGQYWVGRGPTGSYFVRQTLFFLGETDIEPADKMGSLLRVLQDQEIAFRFNVTAYPRLSSFLAIPQGEFVGGIAFHQENILIPQGFYDSPEGPAQLVDRLAEVKLNPGDMWVANTLGGQVMANKDVDNAMHSGWRTASVLLVGNRIFEPALKSQLDVQERLTAVEGPLLHSIGQPAPEAIYLNEADADLENWQDWFWGEKYARLRDIKSKWDPDDLFLVRHGVGSEDWDEDGMCRMQLSPQECPVREHSRCTCKFFECAMLHVPGLL</sequence>
<name>NOTD_ASPVE</name>
<proteinExistence type="evidence at protein level"/>
<organism>
    <name type="scientific">Aspergillus versicolor</name>
    <dbReference type="NCBI Taxonomy" id="46472"/>
    <lineage>
        <taxon>Eukaryota</taxon>
        <taxon>Fungi</taxon>
        <taxon>Dikarya</taxon>
        <taxon>Ascomycota</taxon>
        <taxon>Pezizomycotina</taxon>
        <taxon>Eurotiomycetes</taxon>
        <taxon>Eurotiomycetidae</taxon>
        <taxon>Eurotiales</taxon>
        <taxon>Aspergillaceae</taxon>
        <taxon>Aspergillus</taxon>
        <taxon>Aspergillus subgen. Nidulantes</taxon>
    </lineage>
</organism>
<dbReference type="EC" id="1.-.-.-" evidence="9"/>
<dbReference type="EMBL" id="JQ708194">
    <property type="protein sequence ID" value="AGC83575.1"/>
    <property type="molecule type" value="Genomic_DNA"/>
</dbReference>
<dbReference type="SMR" id="L7WR40"/>
<dbReference type="GlyCosmos" id="L7WR40">
    <property type="glycosylation" value="5 sites, No reported glycans"/>
</dbReference>
<dbReference type="VEuPathDB" id="FungiDB:ASPVEDRAFT_203042"/>
<dbReference type="GO" id="GO:0071949">
    <property type="term" value="F:FAD binding"/>
    <property type="evidence" value="ECO:0007669"/>
    <property type="project" value="InterPro"/>
</dbReference>
<dbReference type="GO" id="GO:0016491">
    <property type="term" value="F:oxidoreductase activity"/>
    <property type="evidence" value="ECO:0007669"/>
    <property type="project" value="UniProtKB-KW"/>
</dbReference>
<dbReference type="GO" id="GO:0009820">
    <property type="term" value="P:alkaloid metabolic process"/>
    <property type="evidence" value="ECO:0007669"/>
    <property type="project" value="UniProtKB-KW"/>
</dbReference>
<dbReference type="Gene3D" id="3.30.465.10">
    <property type="match status" value="2"/>
</dbReference>
<dbReference type="InterPro" id="IPR012951">
    <property type="entry name" value="BBE"/>
</dbReference>
<dbReference type="InterPro" id="IPR016166">
    <property type="entry name" value="FAD-bd_PCMH"/>
</dbReference>
<dbReference type="InterPro" id="IPR036318">
    <property type="entry name" value="FAD-bd_PCMH-like_sf"/>
</dbReference>
<dbReference type="InterPro" id="IPR016169">
    <property type="entry name" value="FAD-bd_PCMH_sub2"/>
</dbReference>
<dbReference type="InterPro" id="IPR050416">
    <property type="entry name" value="FAD-linked_Oxidoreductase"/>
</dbReference>
<dbReference type="InterPro" id="IPR006094">
    <property type="entry name" value="Oxid_FAD_bind_N"/>
</dbReference>
<dbReference type="PANTHER" id="PTHR42973">
    <property type="entry name" value="BINDING OXIDOREDUCTASE, PUTATIVE (AFU_ORTHOLOGUE AFUA_1G17690)-RELATED"/>
    <property type="match status" value="1"/>
</dbReference>
<dbReference type="PANTHER" id="PTHR42973:SF39">
    <property type="entry name" value="FAD-BINDING PCMH-TYPE DOMAIN-CONTAINING PROTEIN"/>
    <property type="match status" value="1"/>
</dbReference>
<dbReference type="Pfam" id="PF08031">
    <property type="entry name" value="BBE"/>
    <property type="match status" value="1"/>
</dbReference>
<dbReference type="Pfam" id="PF01565">
    <property type="entry name" value="FAD_binding_4"/>
    <property type="match status" value="1"/>
</dbReference>
<dbReference type="SUPFAM" id="SSF56176">
    <property type="entry name" value="FAD-binding/transporter-associated domain-like"/>
    <property type="match status" value="1"/>
</dbReference>
<dbReference type="PROSITE" id="PS51387">
    <property type="entry name" value="FAD_PCMH"/>
    <property type="match status" value="1"/>
</dbReference>
<protein>
    <recommendedName>
        <fullName evidence="7">FAD-linked oxidoreductase notD'</fullName>
        <ecNumber evidence="9">1.-.-.-</ecNumber>
    </recommendedName>
    <alternativeName>
        <fullName evidence="7">Notoamide biosynthesis cluster protein D'</fullName>
    </alternativeName>
</protein>
<reference key="1">
    <citation type="journal article" date="2012" name="Med. Chem. Commun.">
        <title>Comparative analysis of the biosynthetic systems for fungal bicyclo[2.2.2]diazaoctane indole alkaloids: the (+)/(-)-notoamide, paraherquamide and malbrancheamide pathways.</title>
        <authorList>
            <person name="Li S."/>
            <person name="Anand K."/>
            <person name="Tran H."/>
            <person name="Yu F."/>
            <person name="Finefield J.M."/>
            <person name="Sunderhaus J.D."/>
            <person name="McAfoos T.J."/>
            <person name="Tsukamoto S."/>
            <person name="Williams R.M."/>
            <person name="Sherman D.H."/>
        </authorList>
    </citation>
    <scope>NUCLEOTIDE SEQUENCE [GENOMIC DNA]</scope>
    <scope>FUNCTION</scope>
    <source>
        <strain>NRRL 35600</strain>
    </source>
</reference>
<reference key="2">
    <citation type="journal article" date="2007" name="Angew. Chem. Int. Ed.">
        <title>Notoamides A-D: prenylated indole alkaloids isolated from a marine-derived fungus, Aspergillus sp.</title>
        <authorList>
            <person name="Kato H."/>
            <person name="Yoshida T."/>
            <person name="Tokue T."/>
            <person name="Nojiri Y."/>
            <person name="Hirota H."/>
            <person name="Ohta T."/>
            <person name="Williams R.M."/>
            <person name="Tsukamoto S."/>
        </authorList>
    </citation>
    <scope>BIOTECHNOLOGY</scope>
</reference>
<reference key="3">
    <citation type="journal article" date="2013" name="Appl. Microbiol. Biotechnol.">
        <title>Identification of a brevianamide F reverse prenyltransferase BrePT from Aspergillus versicolor with a broad substrate specificity towards tryptophan-containing cyclic dipeptides.</title>
        <authorList>
            <person name="Yin S."/>
            <person name="Yu X."/>
            <person name="Wang Q."/>
            <person name="Liu X.Q."/>
            <person name="Li S.M."/>
        </authorList>
    </citation>
    <scope>FUNCTION</scope>
</reference>
<keyword id="KW-0017">Alkaloid metabolism</keyword>
<keyword id="KW-0274">FAD</keyword>
<keyword id="KW-0285">Flavoprotein</keyword>
<keyword id="KW-0325">Glycoprotein</keyword>
<keyword id="KW-0560">Oxidoreductase</keyword>
<keyword id="KW-0732">Signal</keyword>
<accession>L7WR40</accession>
<feature type="signal peptide" evidence="1">
    <location>
        <begin position="1"/>
        <end position="19"/>
    </location>
</feature>
<feature type="chain" id="PRO_5003985493" description="FAD-linked oxidoreductase notD'">
    <location>
        <begin position="20"/>
        <end position="612"/>
    </location>
</feature>
<feature type="domain" description="FAD-binding PCMH-type" evidence="3">
    <location>
        <begin position="124"/>
        <end position="307"/>
    </location>
</feature>
<feature type="glycosylation site" description="N-linked (GlcNAc...) asparagine" evidence="2">
    <location>
        <position position="50"/>
    </location>
</feature>
<feature type="glycosylation site" description="N-linked (GlcNAc...) asparagine" evidence="2">
    <location>
        <position position="86"/>
    </location>
</feature>
<feature type="glycosylation site" description="N-linked (GlcNAc...) asparagine" evidence="2">
    <location>
        <position position="109"/>
    </location>
</feature>
<feature type="glycosylation site" description="N-linked (GlcNAc...) asparagine" evidence="2">
    <location>
        <position position="311"/>
    </location>
</feature>
<feature type="glycosylation site" description="N-linked (GlcNAc...) asparagine" evidence="2">
    <location>
        <position position="396"/>
    </location>
</feature>
<comment type="function">
    <text evidence="5 6 9">FAD-linked oxidoreductase; part of the gene cluster that mediates the biosynthesis of notoamide, a fungal indole alkaloid that belongs to a family of natural products containing a characteristic bicyclo[2.2.2]diazaoctane core (PubMed:23213353). The first step of notoamide biosynthesis involves coupling of L-proline and L-tryptophan by the bimodular NRPS notE', to produce cyclo-L-tryptophan-L-proline called brevianamide F (Probable). The reverse prenyltransferase notF' then acts as a deoxybrevianamide E synthase and converts brevianamide F to deoxybrevianamide E via reverse prenylation at C-2 of the indole ring leading to the bicyclo[2.2.2]diazaoctane core (Probable) (PubMed:22660767). Deoxybrevianamide E is further hydroxylated at C-6 of the indole ring, likely catalyzed by the cytochrome P450 monooxygenase notG', to yield 6-hydroxy-deoxybrevianamide E (Probable). 6-hydroxy-deoxybrevianamide E is a specific substrate of the prenyltransferase notC' for normal prenylation at C-7 to produce 6-hydroxy-7-prenyl-deoxybrevianamide, also called notoamide S (Probable). As the proposed pivotal branching point in notoamide biosynthesis, notoamide S can be diverted to notoamide E through an oxidative pyran ring closure putatively catalyzed by either notH' cytochrome P450 monooxygenase or the notD' FAD-linked oxidoreductase (Probable). This step would be followed by an indole 2,3-epoxidation-initiated pinacol-like rearrangement catalyzed by the notB' FAD-dependent monooxygenase leading to the formation of notoamide C and notoamide D (Probable). On the other hand notoamide S is converted to notoamide T by notH' (or notD'), a bifunctional oxidase that also functions as the intramolecular Diels-Alderase responsible for generation of (-)-notoamide T (Probable). To generate antipodal (+)-notoaminide T, notH (or notD) in Aspergillus strain MF297-2 is expected to catalyze a Diels-Alder reaction leading to the opposite stereochemistry (Probable). The remaining oxidoreductase notD' (or notH') likely catalyzes the oxidative pyran ring formation to yield (-)-stephacidin A (Probable). The FAD-dependent monooxygenase notI' is highly similar to notB' and is predicted to catalyze a similar conversion from (-)-stephacidin A to (+)-notoamide B via the 2,3-epoxidation of (-)-stephacidin A followed by a pinacol-type rearrangement (Probable). Finally, it remains unclear which enzyme could be responsible for the final hydroxylation steps leading to notoamide A and sclerotiamide (Probable).</text>
</comment>
<comment type="cofactor">
    <cofactor evidence="8">
        <name>FAD</name>
        <dbReference type="ChEBI" id="CHEBI:57692"/>
    </cofactor>
</comment>
<comment type="pathway">
    <text evidence="9">Alkaloid biosynthesis.</text>
</comment>
<comment type="biotechnology">
    <text evidence="4">Notoamides have been shown to exhibit antitumoral activities (PubMed:17304611). Notoamides A-C show moderate cytotoxicity against HeLa and L1210 cells with IC(50) values in the range of 22-52 mg/ml, but the IC(50) value of notoamide D is greater than 100 mg/ml (PubMed:17304611). Moreover, notoamide C induces G2/M-cell cycle arrest at a concentration of 6.3 mg/ml (PubMed:17304611).</text>
</comment>
<comment type="similarity">
    <text evidence="8">Belongs to the oxygen-dependent FAD-linked oxidoreductase family.</text>
</comment>
<gene>
    <name evidence="7" type="primary">notD'</name>
</gene>